<sequence length="1084" mass="124621">MTNTIPNWIKLNNEIMIQKDGKYQFEKDKEAVHSYFVDYINQNTVFFHDLKEKLDYLIKNDYYEEEFLSKYTFEQIKSIYKIAYSYKFRFPSFMSAFKFYNDYALKTNDKTKILERYEDRVSIVALYCADGDYEKAVEEVHTMMKQEYQPATPTFLNAGRKRRGEMVSCFLLEVGDSLNDISRAIDISMQLSKLGGGVALNLNKLRAKGEAIKDVENATKGVVGVMKLLDNAFRYADQMGQRQGSGAVYLSVFHPDITDFLDTKKISADEDVRVKTLSIGVVVPDKFIELAREDKDYYMFYPHSVYKEYGQYLDELDINEMYDELVENPRVRKAKGNARKLLEQLAILRSESGYPYIMFADNVNKVHPNEHISKVKFSNLCVTGETLLLTENGYEKAADLYKKQNDLKVVIDNRTKDFAVGSKGTTIVDAIPMQLTKKDAEIFKVKTKQGYEIRATEWHKFYVKRDGEIQKLQLNQLKTGDKLLVQSAEGAYGKIHEPDLAYIMGIIAGDGTITEKTAKIYLYDNKKVLEQKVTDAVHRIIQKHKVDRAYKHNTSLLPTFNMANPEKQDLLYMNSTVLFDILKKFGMNKETKTRVPEFIFQANKETQAAYLSGLFQTDGCVNANHKAKALTIELTSIHYESLQDVQKLLLNMGVYTTIYSNNKRSQELLPDGKGGSKLYNVKPTHKISIQDRNSRELFMSIVEMKEYDVYKFNLLTETLQPKSRKPKHDFTAEIISIEEDGVEDVYDTTQEDYHSLIFNGIVTGNCSEVLQSSQVSVYTDYDKEDEIGLDISCNLGSMNIVNVMSNQSIASTVRIAIDSLTTVTRKTNIVNAPAVARANTLMRSIGLGQMNLHGFLAQNNIAYESEEAKDFANTYFMMVNFYSLQRSMEIARETGETYYKFDGSTYKSGEYFEKYVTNDYSPQYEKVKKLFGDQHIPNIQDWMKLKEDVMKYGLYHSYRQAIAPTGSISYVQSSTAGVMPIMERIEERTYGNSKTYYPMPGLSAQNWFFYKEAYDMDMFKVVDLIATIQQHVDQGISFTLFLKDTMTTRDLNRIDLYAHHRGIKTLYYARTKDTTQEGCLSCVV</sequence>
<feature type="chain" id="PRO_0000377530" description="Ribonucleoside-diphosphate reductase NrdEB subunit alpha, 1st part">
    <location>
        <begin position="1"/>
        <end position="380"/>
    </location>
</feature>
<feature type="chain" id="PRO_0000377531" description="Bsu nrdEB intein">
    <location>
        <begin position="381"/>
        <end position="765"/>
    </location>
</feature>
<feature type="chain" id="PRO_0000377532" description="Ribonucleoside-diphosphate reductase NrdEB subunit alpha, 2nd part">
    <location>
        <begin position="766"/>
        <end position="1084"/>
    </location>
</feature>
<feature type="domain" description="DOD-type homing endonuclease" evidence="3">
    <location>
        <begin position="503"/>
        <end position="654"/>
    </location>
</feature>
<feature type="active site" description="Proton acceptor" evidence="2">
    <location>
        <position position="379"/>
    </location>
</feature>
<feature type="active site" description="Cysteine radical intermediate" evidence="2">
    <location>
        <position position="381"/>
    </location>
</feature>
<feature type="active site" description="Proton acceptor" evidence="2">
    <location>
        <position position="768"/>
    </location>
</feature>
<feature type="binding site" evidence="1">
    <location>
        <position position="152"/>
    </location>
    <ligand>
        <name>substrate</name>
    </ligand>
</feature>
<feature type="binding site" evidence="1">
    <location>
        <begin position="168"/>
        <end position="169"/>
    </location>
    <ligand>
        <name>substrate</name>
    </ligand>
</feature>
<feature type="binding site" evidence="1">
    <location>
        <position position="197"/>
    </location>
    <ligand>
        <name>substrate</name>
    </ligand>
</feature>
<feature type="binding site" evidence="1">
    <location>
        <begin position="964"/>
        <end position="968"/>
    </location>
    <ligand>
        <name>substrate</name>
    </ligand>
</feature>
<feature type="site" description="Important for hydrogen atom transfer" evidence="1">
    <location>
        <position position="169"/>
    </location>
</feature>
<feature type="site" description="Allosteric effector binding" evidence="1">
    <location>
        <position position="176"/>
    </location>
</feature>
<feature type="site" description="Allosteric effector binding" evidence="1">
    <location>
        <position position="206"/>
    </location>
</feature>
<feature type="site" description="Important for hydrogen atom transfer" evidence="1">
    <location>
        <position position="793"/>
    </location>
</feature>
<feature type="site" description="Important for electron transfer" evidence="1">
    <location>
        <position position="1067"/>
    </location>
</feature>
<feature type="site" description="Important for electron transfer" evidence="1">
    <location>
        <position position="1068"/>
    </location>
</feature>
<feature type="site" description="Interacts with thioredoxin/glutaredoxin" evidence="1">
    <location>
        <position position="1079"/>
    </location>
</feature>
<feature type="site" description="Interacts with thioredoxin/glutaredoxin" evidence="1">
    <location>
        <position position="1082"/>
    </location>
</feature>
<feature type="disulfide bond" description="Redox-active" evidence="1">
    <location>
        <begin position="169"/>
        <end position="793"/>
    </location>
</feature>
<accession>O31875</accession>
<accession>Q7BVQ5</accession>
<proteinExistence type="inferred from homology"/>
<dbReference type="EC" id="1.17.4.1"/>
<dbReference type="EMBL" id="AL009126">
    <property type="protein sequence ID" value="CAB13898.2"/>
    <property type="molecule type" value="Genomic_DNA"/>
</dbReference>
<dbReference type="EMBL" id="AF012906">
    <property type="protein sequence ID" value="AAB92484.1"/>
    <property type="molecule type" value="Genomic_DNA"/>
</dbReference>
<dbReference type="PIR" id="H69926">
    <property type="entry name" value="H69926"/>
</dbReference>
<dbReference type="RefSeq" id="NP_389888.2">
    <property type="nucleotide sequence ID" value="NC_000964.3"/>
</dbReference>
<dbReference type="RefSeq" id="WP_010886539.1">
    <property type="nucleotide sequence ID" value="NC_000964.3"/>
</dbReference>
<dbReference type="SMR" id="O31875"/>
<dbReference type="FunCoup" id="O31875">
    <property type="interactions" value="641"/>
</dbReference>
<dbReference type="STRING" id="224308.BSU20060"/>
<dbReference type="PaxDb" id="224308-BSU20060"/>
<dbReference type="EnsemblBacteria" id="CAB13898">
    <property type="protein sequence ID" value="CAB13898"/>
    <property type="gene ID" value="BSU_20060"/>
</dbReference>
<dbReference type="GeneID" id="939475"/>
<dbReference type="KEGG" id="bsu:BSU20060"/>
<dbReference type="PATRIC" id="fig|224308.43.peg.2120"/>
<dbReference type="eggNOG" id="COG0209">
    <property type="taxonomic scope" value="Bacteria"/>
</dbReference>
<dbReference type="eggNOG" id="COG1372">
    <property type="taxonomic scope" value="Bacteria"/>
</dbReference>
<dbReference type="InParanoid" id="O31875"/>
<dbReference type="OrthoDB" id="9762933at2"/>
<dbReference type="BioCyc" id="BSUB:BSU20060-MONOMER"/>
<dbReference type="Proteomes" id="UP000001570">
    <property type="component" value="Chromosome"/>
</dbReference>
<dbReference type="GO" id="GO:0005971">
    <property type="term" value="C:ribonucleoside-diphosphate reductase complex"/>
    <property type="evidence" value="ECO:0000318"/>
    <property type="project" value="GO_Central"/>
</dbReference>
<dbReference type="GO" id="GO:0005524">
    <property type="term" value="F:ATP binding"/>
    <property type="evidence" value="ECO:0000318"/>
    <property type="project" value="GO_Central"/>
</dbReference>
<dbReference type="GO" id="GO:0004519">
    <property type="term" value="F:endonuclease activity"/>
    <property type="evidence" value="ECO:0007669"/>
    <property type="project" value="InterPro"/>
</dbReference>
<dbReference type="GO" id="GO:0004748">
    <property type="term" value="F:ribonucleoside-diphosphate reductase activity, thioredoxin disulfide as acceptor"/>
    <property type="evidence" value="ECO:0000318"/>
    <property type="project" value="GO_Central"/>
</dbReference>
<dbReference type="GO" id="GO:0009263">
    <property type="term" value="P:deoxyribonucleotide biosynthetic process"/>
    <property type="evidence" value="ECO:0000318"/>
    <property type="project" value="GO_Central"/>
</dbReference>
<dbReference type="GO" id="GO:0016539">
    <property type="term" value="P:intein-mediated protein splicing"/>
    <property type="evidence" value="ECO:0007669"/>
    <property type="project" value="InterPro"/>
</dbReference>
<dbReference type="CDD" id="cd00081">
    <property type="entry name" value="Hint"/>
    <property type="match status" value="1"/>
</dbReference>
<dbReference type="Gene3D" id="3.20.70.20">
    <property type="match status" value="2"/>
</dbReference>
<dbReference type="Gene3D" id="2.170.16.10">
    <property type="entry name" value="Hedgehog/Intein (Hint) domain"/>
    <property type="match status" value="1"/>
</dbReference>
<dbReference type="Gene3D" id="3.10.28.10">
    <property type="entry name" value="Homing endonucleases"/>
    <property type="match status" value="1"/>
</dbReference>
<dbReference type="InterPro" id="IPR003586">
    <property type="entry name" value="Hint_dom_C"/>
</dbReference>
<dbReference type="InterPro" id="IPR003587">
    <property type="entry name" value="Hint_dom_N"/>
</dbReference>
<dbReference type="InterPro" id="IPR036844">
    <property type="entry name" value="Hint_dom_sf"/>
</dbReference>
<dbReference type="InterPro" id="IPR027434">
    <property type="entry name" value="Homing_endonucl"/>
</dbReference>
<dbReference type="InterPro" id="IPR006142">
    <property type="entry name" value="INTEIN"/>
</dbReference>
<dbReference type="InterPro" id="IPR030934">
    <property type="entry name" value="Intein_C"/>
</dbReference>
<dbReference type="InterPro" id="IPR004042">
    <property type="entry name" value="Intein_endonuc_central"/>
</dbReference>
<dbReference type="InterPro" id="IPR006141">
    <property type="entry name" value="Intein_N"/>
</dbReference>
<dbReference type="InterPro" id="IPR004860">
    <property type="entry name" value="LAGLIDADG_dom"/>
</dbReference>
<dbReference type="InterPro" id="IPR013346">
    <property type="entry name" value="NrdE_NrdA_C"/>
</dbReference>
<dbReference type="InterPro" id="IPR000788">
    <property type="entry name" value="RNR_lg_C"/>
</dbReference>
<dbReference type="InterPro" id="IPR013509">
    <property type="entry name" value="RNR_lsu_N"/>
</dbReference>
<dbReference type="InterPro" id="IPR013554">
    <property type="entry name" value="RNR_N"/>
</dbReference>
<dbReference type="InterPro" id="IPR008926">
    <property type="entry name" value="RNR_R1-su_N"/>
</dbReference>
<dbReference type="InterPro" id="IPR039718">
    <property type="entry name" value="Rrm1"/>
</dbReference>
<dbReference type="NCBIfam" id="TIGR01443">
    <property type="entry name" value="intein_Cterm"/>
    <property type="match status" value="1"/>
</dbReference>
<dbReference type="NCBIfam" id="TIGR01445">
    <property type="entry name" value="intein_Nterm"/>
    <property type="match status" value="1"/>
</dbReference>
<dbReference type="PANTHER" id="PTHR11573:SF30">
    <property type="entry name" value="RIBONUCLEOSIDE-DIPHOSPHATE REDUCTASE 2 SUBUNIT ALPHA"/>
    <property type="match status" value="1"/>
</dbReference>
<dbReference type="PANTHER" id="PTHR11573">
    <property type="entry name" value="RIBONUCLEOSIDE-DIPHOSPHATE REDUCTASE LARGE CHAIN"/>
    <property type="match status" value="1"/>
</dbReference>
<dbReference type="Pfam" id="PF14890">
    <property type="entry name" value="Intein_splicing"/>
    <property type="match status" value="1"/>
</dbReference>
<dbReference type="Pfam" id="PF14528">
    <property type="entry name" value="LAGLIDADG_3"/>
    <property type="match status" value="1"/>
</dbReference>
<dbReference type="Pfam" id="PF02867">
    <property type="entry name" value="Ribonuc_red_lgC"/>
    <property type="match status" value="1"/>
</dbReference>
<dbReference type="Pfam" id="PF00317">
    <property type="entry name" value="Ribonuc_red_lgN"/>
    <property type="match status" value="1"/>
</dbReference>
<dbReference type="Pfam" id="PF08343">
    <property type="entry name" value="RNR_N"/>
    <property type="match status" value="1"/>
</dbReference>
<dbReference type="PRINTS" id="PR00379">
    <property type="entry name" value="INTEIN"/>
</dbReference>
<dbReference type="SMART" id="SM00305">
    <property type="entry name" value="HintC"/>
    <property type="match status" value="1"/>
</dbReference>
<dbReference type="SMART" id="SM00306">
    <property type="entry name" value="HintN"/>
    <property type="match status" value="1"/>
</dbReference>
<dbReference type="SUPFAM" id="SSF51294">
    <property type="entry name" value="Hedgehog/intein (Hint) domain"/>
    <property type="match status" value="1"/>
</dbReference>
<dbReference type="SUPFAM" id="SSF55608">
    <property type="entry name" value="Homing endonucleases"/>
    <property type="match status" value="1"/>
</dbReference>
<dbReference type="SUPFAM" id="SSF51998">
    <property type="entry name" value="PFL-like glycyl radical enzymes"/>
    <property type="match status" value="1"/>
</dbReference>
<dbReference type="SUPFAM" id="SSF48168">
    <property type="entry name" value="R1 subunit of ribonucleotide reductase, N-terminal domain"/>
    <property type="match status" value="1"/>
</dbReference>
<dbReference type="PROSITE" id="PS50818">
    <property type="entry name" value="INTEIN_C_TER"/>
    <property type="match status" value="1"/>
</dbReference>
<dbReference type="PROSITE" id="PS50819">
    <property type="entry name" value="INTEIN_ENDONUCLEASE"/>
    <property type="match status" value="1"/>
</dbReference>
<dbReference type="PROSITE" id="PS50817">
    <property type="entry name" value="INTEIN_N_TER"/>
    <property type="match status" value="1"/>
</dbReference>
<dbReference type="PROSITE" id="PS00089">
    <property type="entry name" value="RIBORED_LARGE"/>
    <property type="match status" value="1"/>
</dbReference>
<reference key="1">
    <citation type="journal article" date="1997" name="Nature">
        <title>The complete genome sequence of the Gram-positive bacterium Bacillus subtilis.</title>
        <authorList>
            <person name="Kunst F."/>
            <person name="Ogasawara N."/>
            <person name="Moszer I."/>
            <person name="Albertini A.M."/>
            <person name="Alloni G."/>
            <person name="Azevedo V."/>
            <person name="Bertero M.G."/>
            <person name="Bessieres P."/>
            <person name="Bolotin A."/>
            <person name="Borchert S."/>
            <person name="Borriss R."/>
            <person name="Boursier L."/>
            <person name="Brans A."/>
            <person name="Braun M."/>
            <person name="Brignell S.C."/>
            <person name="Bron S."/>
            <person name="Brouillet S."/>
            <person name="Bruschi C.V."/>
            <person name="Caldwell B."/>
            <person name="Capuano V."/>
            <person name="Carter N.M."/>
            <person name="Choi S.-K."/>
            <person name="Codani J.-J."/>
            <person name="Connerton I.F."/>
            <person name="Cummings N.J."/>
            <person name="Daniel R.A."/>
            <person name="Denizot F."/>
            <person name="Devine K.M."/>
            <person name="Duesterhoeft A."/>
            <person name="Ehrlich S.D."/>
            <person name="Emmerson P.T."/>
            <person name="Entian K.-D."/>
            <person name="Errington J."/>
            <person name="Fabret C."/>
            <person name="Ferrari E."/>
            <person name="Foulger D."/>
            <person name="Fritz C."/>
            <person name="Fujita M."/>
            <person name="Fujita Y."/>
            <person name="Fuma S."/>
            <person name="Galizzi A."/>
            <person name="Galleron N."/>
            <person name="Ghim S.-Y."/>
            <person name="Glaser P."/>
            <person name="Goffeau A."/>
            <person name="Golightly E.J."/>
            <person name="Grandi G."/>
            <person name="Guiseppi G."/>
            <person name="Guy B.J."/>
            <person name="Haga K."/>
            <person name="Haiech J."/>
            <person name="Harwood C.R."/>
            <person name="Henaut A."/>
            <person name="Hilbert H."/>
            <person name="Holsappel S."/>
            <person name="Hosono S."/>
            <person name="Hullo M.-F."/>
            <person name="Itaya M."/>
            <person name="Jones L.-M."/>
            <person name="Joris B."/>
            <person name="Karamata D."/>
            <person name="Kasahara Y."/>
            <person name="Klaerr-Blanchard M."/>
            <person name="Klein C."/>
            <person name="Kobayashi Y."/>
            <person name="Koetter P."/>
            <person name="Koningstein G."/>
            <person name="Krogh S."/>
            <person name="Kumano M."/>
            <person name="Kurita K."/>
            <person name="Lapidus A."/>
            <person name="Lardinois S."/>
            <person name="Lauber J."/>
            <person name="Lazarevic V."/>
            <person name="Lee S.-M."/>
            <person name="Levine A."/>
            <person name="Liu H."/>
            <person name="Masuda S."/>
            <person name="Mauel C."/>
            <person name="Medigue C."/>
            <person name="Medina N."/>
            <person name="Mellado R.P."/>
            <person name="Mizuno M."/>
            <person name="Moestl D."/>
            <person name="Nakai S."/>
            <person name="Noback M."/>
            <person name="Noone D."/>
            <person name="O'Reilly M."/>
            <person name="Ogawa K."/>
            <person name="Ogiwara A."/>
            <person name="Oudega B."/>
            <person name="Park S.-H."/>
            <person name="Parro V."/>
            <person name="Pohl T.M."/>
            <person name="Portetelle D."/>
            <person name="Porwollik S."/>
            <person name="Prescott A.M."/>
            <person name="Presecan E."/>
            <person name="Pujic P."/>
            <person name="Purnelle B."/>
            <person name="Rapoport G."/>
            <person name="Rey M."/>
            <person name="Reynolds S."/>
            <person name="Rieger M."/>
            <person name="Rivolta C."/>
            <person name="Rocha E."/>
            <person name="Roche B."/>
            <person name="Rose M."/>
            <person name="Sadaie Y."/>
            <person name="Sato T."/>
            <person name="Scanlan E."/>
            <person name="Schleich S."/>
            <person name="Schroeter R."/>
            <person name="Scoffone F."/>
            <person name="Sekiguchi J."/>
            <person name="Sekowska A."/>
            <person name="Seror S.J."/>
            <person name="Serror P."/>
            <person name="Shin B.-S."/>
            <person name="Soldo B."/>
            <person name="Sorokin A."/>
            <person name="Tacconi E."/>
            <person name="Takagi T."/>
            <person name="Takahashi H."/>
            <person name="Takemaru K."/>
            <person name="Takeuchi M."/>
            <person name="Tamakoshi A."/>
            <person name="Tanaka T."/>
            <person name="Terpstra P."/>
            <person name="Tognoni A."/>
            <person name="Tosato V."/>
            <person name="Uchiyama S."/>
            <person name="Vandenbol M."/>
            <person name="Vannier F."/>
            <person name="Vassarotti A."/>
            <person name="Viari A."/>
            <person name="Wambutt R."/>
            <person name="Wedler E."/>
            <person name="Wedler H."/>
            <person name="Weitzenegger T."/>
            <person name="Winters P."/>
            <person name="Wipat A."/>
            <person name="Yamamoto H."/>
            <person name="Yamane K."/>
            <person name="Yasumoto K."/>
            <person name="Yata K."/>
            <person name="Yoshida K."/>
            <person name="Yoshikawa H.-F."/>
            <person name="Zumstein E."/>
            <person name="Yoshikawa H."/>
            <person name="Danchin A."/>
        </authorList>
    </citation>
    <scope>NUCLEOTIDE SEQUENCE [LARGE SCALE GENOMIC DNA]</scope>
    <source>
        <strain>168</strain>
    </source>
</reference>
<reference key="2">
    <citation type="journal article" date="2009" name="Microbiology">
        <title>From a consortium sequence to a unified sequence: the Bacillus subtilis 168 reference genome a decade later.</title>
        <authorList>
            <person name="Barbe V."/>
            <person name="Cruveiller S."/>
            <person name="Kunst F."/>
            <person name="Lenoble P."/>
            <person name="Meurice G."/>
            <person name="Sekowska A."/>
            <person name="Vallenet D."/>
            <person name="Wang T."/>
            <person name="Moszer I."/>
            <person name="Medigue C."/>
            <person name="Danchin A."/>
        </authorList>
    </citation>
    <scope>SEQUENCE REVISION TO C-TERMINUS</scope>
</reference>
<reference key="3">
    <citation type="journal article" date="1998" name="DNA Res.">
        <title>An 8 kb nucleotide sequence at the 3' flanking region of the sspC gene (184 degrees) on the Bacillus subtilis 168 chromosome containing an intein and an intron.</title>
        <authorList>
            <person name="Ghim S.-Y."/>
            <person name="Choi S.-K."/>
            <person name="Shin B.-S."/>
            <person name="Park S.-H."/>
        </authorList>
    </citation>
    <scope>NUCLEOTIDE SEQUENCE [GENOMIC DNA] OF 424-1084</scope>
    <source>
        <strain>168</strain>
    </source>
</reference>
<evidence type="ECO:0000250" key="1"/>
<evidence type="ECO:0000255" key="2"/>
<evidence type="ECO:0000255" key="3">
    <source>
        <dbReference type="PROSITE-ProRule" id="PRU00273"/>
    </source>
</evidence>
<evidence type="ECO:0000305" key="4"/>
<name>NRDEB_BACSU</name>
<keyword id="KW-0021">Allosteric enzyme</keyword>
<keyword id="KW-0067">ATP-binding</keyword>
<keyword id="KW-0068">Autocatalytic cleavage</keyword>
<keyword id="KW-0215">Deoxyribonucleotide synthesis</keyword>
<keyword id="KW-1015">Disulfide bond</keyword>
<keyword id="KW-0547">Nucleotide-binding</keyword>
<keyword id="KW-0560">Oxidoreductase</keyword>
<keyword id="KW-0651">Protein splicing</keyword>
<keyword id="KW-1185">Reference proteome</keyword>
<comment type="function">
    <text evidence="1">Provides the precursors necessary for DNA synthesis. Catalyzes the biosynthesis of deoxyribonucleotides from the corresponding ribonucleotides (By similarity).</text>
</comment>
<comment type="catalytic activity">
    <reaction>
        <text>a 2'-deoxyribonucleoside 5'-diphosphate + [thioredoxin]-disulfide + H2O = a ribonucleoside 5'-diphosphate + [thioredoxin]-dithiol</text>
        <dbReference type="Rhea" id="RHEA:23252"/>
        <dbReference type="Rhea" id="RHEA-COMP:10698"/>
        <dbReference type="Rhea" id="RHEA-COMP:10700"/>
        <dbReference type="ChEBI" id="CHEBI:15377"/>
        <dbReference type="ChEBI" id="CHEBI:29950"/>
        <dbReference type="ChEBI" id="CHEBI:50058"/>
        <dbReference type="ChEBI" id="CHEBI:57930"/>
        <dbReference type="ChEBI" id="CHEBI:73316"/>
        <dbReference type="EC" id="1.17.4.1"/>
    </reaction>
</comment>
<comment type="activity regulation">
    <text evidence="1">Under complex allosteric control mediated by deoxynucleoside triphosphates and ATP binding. The type of nucleotide bound at the specificity site determines substrate preference. It seems probable that ATP makes the enzyme reduce CDP and UDP, dGTP favors ADP reduction and dTTP favors GDP reduction (By similarity).</text>
</comment>
<comment type="subunit">
    <text evidence="1">Tetramer of two alpha and two beta subunits.</text>
</comment>
<comment type="PTM">
    <text evidence="4">This protein undergoes protein self-splicing that involves post-translational excision of the intervening region (intein) followed by peptide ligation.</text>
</comment>
<comment type="similarity">
    <text evidence="4">Belongs to the ribonucleoside diphosphate reductase large chain family.</text>
</comment>
<organism>
    <name type="scientific">Bacillus subtilis (strain 168)</name>
    <dbReference type="NCBI Taxonomy" id="224308"/>
    <lineage>
        <taxon>Bacteria</taxon>
        <taxon>Bacillati</taxon>
        <taxon>Bacillota</taxon>
        <taxon>Bacilli</taxon>
        <taxon>Bacillales</taxon>
        <taxon>Bacillaceae</taxon>
        <taxon>Bacillus</taxon>
    </lineage>
</organism>
<protein>
    <recommendedName>
        <fullName>Ribonucleoside-diphosphate reductase NrdEB subunit alpha</fullName>
        <ecNumber>1.17.4.1</ecNumber>
    </recommendedName>
    <alternativeName>
        <fullName>Ribonucleotide reductase large subunit</fullName>
    </alternativeName>
    <component>
        <recommendedName>
            <fullName>Bsu nrdEB intein</fullName>
        </recommendedName>
    </component>
</protein>
<gene>
    <name type="primary">nrdEB</name>
    <name type="synonym">yojP</name>
    <name type="synonym">yosN</name>
    <name type="ordered locus">BSU20060</name>
</gene>